<dbReference type="EMBL" id="X74130">
    <property type="protein sequence ID" value="CAA52228.1"/>
    <property type="molecule type" value="Genomic_DNA"/>
</dbReference>
<dbReference type="EMBL" id="L19162">
    <property type="protein sequence ID" value="AAA34461.1"/>
    <property type="molecule type" value="Genomic_DNA"/>
</dbReference>
<dbReference type="EMBL" id="X75561">
    <property type="protein sequence ID" value="CAA53241.1"/>
    <property type="molecule type" value="Genomic_DNA"/>
</dbReference>
<dbReference type="EMBL" id="Z28092">
    <property type="protein sequence ID" value="CAA81930.1"/>
    <property type="molecule type" value="Genomic_DNA"/>
</dbReference>
<dbReference type="EMBL" id="BK006944">
    <property type="protein sequence ID" value="DAA09066.1"/>
    <property type="molecule type" value="Genomic_DNA"/>
</dbReference>
<dbReference type="PIR" id="S36773">
    <property type="entry name" value="S36773"/>
</dbReference>
<dbReference type="RefSeq" id="NP_012831.1">
    <property type="nucleotide sequence ID" value="NM_001179658.1"/>
</dbReference>
<dbReference type="SMR" id="P33314"/>
<dbReference type="BioGRID" id="34041">
    <property type="interactions" value="99"/>
</dbReference>
<dbReference type="DIP" id="DIP-2689N"/>
<dbReference type="FunCoup" id="P33314">
    <property type="interactions" value="109"/>
</dbReference>
<dbReference type="IntAct" id="P33314">
    <property type="interactions" value="10"/>
</dbReference>
<dbReference type="MINT" id="P33314"/>
<dbReference type="STRING" id="4932.YKL092C"/>
<dbReference type="GlyGen" id="P33314">
    <property type="glycosylation" value="2 sites, 1 O-linked glycan (2 sites)"/>
</dbReference>
<dbReference type="iPTMnet" id="P33314"/>
<dbReference type="PaxDb" id="4932-YKL092C"/>
<dbReference type="PeptideAtlas" id="P33314"/>
<dbReference type="EnsemblFungi" id="YKL092C_mRNA">
    <property type="protein sequence ID" value="YKL092C"/>
    <property type="gene ID" value="YKL092C"/>
</dbReference>
<dbReference type="GeneID" id="853770"/>
<dbReference type="KEGG" id="sce:YKL092C"/>
<dbReference type="AGR" id="SGD:S000001575"/>
<dbReference type="SGD" id="S000001575">
    <property type="gene designation" value="BUD2"/>
</dbReference>
<dbReference type="VEuPathDB" id="FungiDB:YKL092C"/>
<dbReference type="eggNOG" id="KOG3508">
    <property type="taxonomic scope" value="Eukaryota"/>
</dbReference>
<dbReference type="GeneTree" id="ENSGT00550000074797"/>
<dbReference type="HOGENOM" id="CLU_002973_0_0_1"/>
<dbReference type="InParanoid" id="P33314"/>
<dbReference type="OMA" id="WFVGLNY"/>
<dbReference type="OrthoDB" id="775356at2759"/>
<dbReference type="BioCyc" id="YEAST:G3O-31883-MONOMER"/>
<dbReference type="Reactome" id="R-SCE-9696273">
    <property type="pathway name" value="RND1 GTPase cycle"/>
</dbReference>
<dbReference type="BioGRID-ORCS" id="853770">
    <property type="hits" value="0 hits in 10 CRISPR screens"/>
</dbReference>
<dbReference type="PRO" id="PR:P33314"/>
<dbReference type="Proteomes" id="UP000002311">
    <property type="component" value="Chromosome XI"/>
</dbReference>
<dbReference type="RNAct" id="P33314">
    <property type="molecule type" value="protein"/>
</dbReference>
<dbReference type="GO" id="GO:0005935">
    <property type="term" value="C:cellular bud neck"/>
    <property type="evidence" value="ECO:0000314"/>
    <property type="project" value="SGD"/>
</dbReference>
<dbReference type="GO" id="GO:0005737">
    <property type="term" value="C:cytoplasm"/>
    <property type="evidence" value="ECO:0007005"/>
    <property type="project" value="SGD"/>
</dbReference>
<dbReference type="GO" id="GO:0000131">
    <property type="term" value="C:incipient cellular bud site"/>
    <property type="evidence" value="ECO:0000314"/>
    <property type="project" value="SGD"/>
</dbReference>
<dbReference type="GO" id="GO:0005628">
    <property type="term" value="C:prospore membrane"/>
    <property type="evidence" value="ECO:0007005"/>
    <property type="project" value="SGD"/>
</dbReference>
<dbReference type="GO" id="GO:0005096">
    <property type="term" value="F:GTPase activator activity"/>
    <property type="evidence" value="ECO:0000314"/>
    <property type="project" value="SGD"/>
</dbReference>
<dbReference type="GO" id="GO:0007120">
    <property type="term" value="P:axial cellular bud site selection"/>
    <property type="evidence" value="ECO:0000315"/>
    <property type="project" value="SGD"/>
</dbReference>
<dbReference type="GO" id="GO:0007121">
    <property type="term" value="P:bipolar cellular bud site selection"/>
    <property type="evidence" value="ECO:0000315"/>
    <property type="project" value="SGD"/>
</dbReference>
<dbReference type="GO" id="GO:0007163">
    <property type="term" value="P:establishment or maintenance of cell polarity"/>
    <property type="evidence" value="ECO:0000315"/>
    <property type="project" value="SGD"/>
</dbReference>
<dbReference type="GO" id="GO:0030447">
    <property type="term" value="P:filamentous growth"/>
    <property type="evidence" value="ECO:0000315"/>
    <property type="project" value="SGD"/>
</dbReference>
<dbReference type="GO" id="GO:0036267">
    <property type="term" value="P:invasive filamentous growth"/>
    <property type="evidence" value="ECO:0000315"/>
    <property type="project" value="SGD"/>
</dbReference>
<dbReference type="GO" id="GO:0001403">
    <property type="term" value="P:invasive growth in response to glucose limitation"/>
    <property type="evidence" value="ECO:0000315"/>
    <property type="project" value="SGD"/>
</dbReference>
<dbReference type="GO" id="GO:0031578">
    <property type="term" value="P:mitotic spindle orientation checkpoint signaling"/>
    <property type="evidence" value="ECO:0000315"/>
    <property type="project" value="SGD"/>
</dbReference>
<dbReference type="CDD" id="cd00030">
    <property type="entry name" value="C2"/>
    <property type="match status" value="1"/>
</dbReference>
<dbReference type="CDD" id="cd05137">
    <property type="entry name" value="RasGAP_CLA2_BUD2"/>
    <property type="match status" value="1"/>
</dbReference>
<dbReference type="Gene3D" id="2.60.40.150">
    <property type="entry name" value="C2 domain"/>
    <property type="match status" value="1"/>
</dbReference>
<dbReference type="Gene3D" id="1.10.506.10">
    <property type="entry name" value="GTPase Activation - p120gap, domain 1"/>
    <property type="match status" value="1"/>
</dbReference>
<dbReference type="InterPro" id="IPR000008">
    <property type="entry name" value="C2_dom"/>
</dbReference>
<dbReference type="InterPro" id="IPR035892">
    <property type="entry name" value="C2_domain_sf"/>
</dbReference>
<dbReference type="InterPro" id="IPR039360">
    <property type="entry name" value="Ras_GTPase"/>
</dbReference>
<dbReference type="InterPro" id="IPR023152">
    <property type="entry name" value="RasGAP_CS"/>
</dbReference>
<dbReference type="InterPro" id="IPR001936">
    <property type="entry name" value="RasGAP_dom"/>
</dbReference>
<dbReference type="InterPro" id="IPR008936">
    <property type="entry name" value="Rho_GTPase_activation_prot"/>
</dbReference>
<dbReference type="PANTHER" id="PTHR10194:SF60">
    <property type="entry name" value="RAS GTPASE-ACTIVATING PROTEIN RASKOL"/>
    <property type="match status" value="1"/>
</dbReference>
<dbReference type="PANTHER" id="PTHR10194">
    <property type="entry name" value="RAS GTPASE-ACTIVATING PROTEINS"/>
    <property type="match status" value="1"/>
</dbReference>
<dbReference type="Pfam" id="PF00168">
    <property type="entry name" value="C2"/>
    <property type="match status" value="1"/>
</dbReference>
<dbReference type="Pfam" id="PF00616">
    <property type="entry name" value="RasGAP"/>
    <property type="match status" value="1"/>
</dbReference>
<dbReference type="SMART" id="SM00239">
    <property type="entry name" value="C2"/>
    <property type="match status" value="1"/>
</dbReference>
<dbReference type="SMART" id="SM00323">
    <property type="entry name" value="RasGAP"/>
    <property type="match status" value="1"/>
</dbReference>
<dbReference type="SUPFAM" id="SSF49562">
    <property type="entry name" value="C2 domain (Calcium/lipid-binding domain, CaLB)"/>
    <property type="match status" value="1"/>
</dbReference>
<dbReference type="SUPFAM" id="SSF48350">
    <property type="entry name" value="GTPase activation domain, GAP"/>
    <property type="match status" value="1"/>
</dbReference>
<dbReference type="PROSITE" id="PS50004">
    <property type="entry name" value="C2"/>
    <property type="match status" value="1"/>
</dbReference>
<dbReference type="PROSITE" id="PS00509">
    <property type="entry name" value="RAS_GTPASE_ACTIV_1"/>
    <property type="match status" value="1"/>
</dbReference>
<dbReference type="PROSITE" id="PS50018">
    <property type="entry name" value="RAS_GTPASE_ACTIV_2"/>
    <property type="match status" value="1"/>
</dbReference>
<organism>
    <name type="scientific">Saccharomyces cerevisiae (strain ATCC 204508 / S288c)</name>
    <name type="common">Baker's yeast</name>
    <dbReference type="NCBI Taxonomy" id="559292"/>
    <lineage>
        <taxon>Eukaryota</taxon>
        <taxon>Fungi</taxon>
        <taxon>Dikarya</taxon>
        <taxon>Ascomycota</taxon>
        <taxon>Saccharomycotina</taxon>
        <taxon>Saccharomycetes</taxon>
        <taxon>Saccharomycetales</taxon>
        <taxon>Saccharomycetaceae</taxon>
        <taxon>Saccharomyces</taxon>
    </lineage>
</organism>
<gene>
    <name type="primary">BUD2</name>
    <name type="synonym">CLA2</name>
    <name type="synonym">ERC25</name>
    <name type="ordered locus">YKL092C</name>
    <name type="ORF">YKL424</name>
</gene>
<proteinExistence type="evidence at protein level"/>
<accession>P33314</accession>
<accession>D6VXJ6</accession>
<evidence type="ECO:0000255" key="1">
    <source>
        <dbReference type="PROSITE-ProRule" id="PRU00041"/>
    </source>
</evidence>
<evidence type="ECO:0000255" key="2">
    <source>
        <dbReference type="PROSITE-ProRule" id="PRU00167"/>
    </source>
</evidence>
<evidence type="ECO:0000256" key="3">
    <source>
        <dbReference type="SAM" id="MobiDB-lite"/>
    </source>
</evidence>
<evidence type="ECO:0000269" key="4">
    <source>
    </source>
</evidence>
<evidence type="ECO:0000305" key="5"/>
<evidence type="ECO:0007744" key="6">
    <source>
    </source>
</evidence>
<evidence type="ECO:0007744" key="7">
    <source>
    </source>
</evidence>
<evidence type="ECO:0007744" key="8">
    <source>
    </source>
</evidence>
<name>BUD2_YEAST</name>
<sequence>MSSNNEPAQSRTSYFKLNEFLSNVKHYKNTFKGEIQWCNNLSLNDWKTHYLQITSTGALTHSIDELTADSTNIQPIIKHLQQCRIEIIKDKHSSFKDINANCNFIIQVNTSGKDNKVYLRVKSWSDFKKLLTCLIWWSSMKTNGIFNKFQVSRPLEFKSKKMAKPESLLVYKLNVFGPIVKNIVLPPATNILESPDIINNDDNSVGWFSAMGVLKSNGMLDLLLQSDGSLIYSLNISQLLRSEIRILDSSVLQSENSLFLGELPLLRSQLGLEKFRIENIASAATNSSDISQEIIVEFPLRIDLEDCFIALQSFARSEYLSITGSDKSNDMKISNSFKISILEANFQSINLNDKNNTPWSIFTDITAWGHTWARTSMVSNSSNPFWREEFQFNELLRLTNSYLEIKQLFHDLNNKKRLRLIGKIKITQEIINDTRYNKETRLPIMDVDNKNFQIGTICIKISSNLNFILPSTNFVKLEKLLMNANLSMVSNLIYKSSSSMENDNKLTQTSIIFLDIFQSLSRIEEWFHVLIDKELAKIDGTVSRINQKNLDSKHVFNSLFRGNSILTKSIEQYFFRVGNEYLSKALSAILKEIIESNKSCELDPARVKEKDEVKKRKIIADNYKRLYSWVTKIWKRLYATSNDLPIEIRNVLKIFRQKLEIICIDDTLQIILNGISGLLFLRFFCPVILNPKLFKYVSQNLNETARRNLTLISKVLLNLSTLTQFANKEPWLMKMNNFIDKRHNDLLDYIDKMTQKKLDFNSKILNLSSTISRPKLAIEQTMLDDLPQIPYLLDKNLRETEFVNLIVNFSQEDMTKMEKYNHMDNGGKGELIEEEGLLSGSSLNLSVDKKDLDSPIEVKPEIGELEFEKITENNTEIFGDDLMNLLKSDDVGSRSRDLDNGANSGIKFNSIIPKAEEEKHAMKELEQESCLLYNRINHIRKRLSGYECASSTLFEDKKYSISLSHKIFYEEIKEGKEIVLKLLNKPTNENSSARLQKFFTKGVSSKSNNTVGDSYCKFLTIDVSDENPKSSNKTSVHGTSSENGAKDDYLTLPNSQGKGNLGNRFSPTKLSRIMRKPPNADVPKEQNSRKLTRWFKKKKETGGS</sequence>
<protein>
    <recommendedName>
        <fullName>Inhibitory regulator protein BUD2/CLA2</fullName>
    </recommendedName>
    <alternativeName>
        <fullName>Bud site selection protein 2</fullName>
    </alternativeName>
</protein>
<comment type="function">
    <text>Stimulates the GTPase activity of BUD1/RSR1. Participates in the regulation of bud-site selection.</text>
</comment>
<comment type="miscellaneous">
    <text evidence="4">Present with 1230 molecules/cell in log phase SD medium.</text>
</comment>
<reference key="1">
    <citation type="journal article" date="1993" name="EMBO J.">
        <title>Yeast G1 cyclins CLN1 and CLN2 and a GAP-like protein have a role in bud formation.</title>
        <authorList>
            <person name="Cvrckova F."/>
            <person name="Nasmyth K."/>
        </authorList>
    </citation>
    <scope>NUCLEOTIDE SEQUENCE [GENOMIC DNA]</scope>
</reference>
<reference key="2">
    <citation type="journal article" date="1993" name="Nature">
        <title>BUD2 encodes a GTPase-activating protein for Bud1/Rsr1 necessary for proper bud-site selection in yeast.</title>
        <authorList>
            <person name="Park H.-O."/>
            <person name="Chant J."/>
            <person name="Herskowitz I."/>
        </authorList>
    </citation>
    <scope>NUCLEOTIDE SEQUENCE [GENOMIC DNA]</scope>
</reference>
<reference key="3">
    <citation type="journal article" date="1994" name="Nature">
        <title>Complete DNA sequence of yeast chromosome XI.</title>
        <authorList>
            <person name="Dujon B."/>
            <person name="Alexandraki D."/>
            <person name="Andre B."/>
            <person name="Ansorge W."/>
            <person name="Baladron V."/>
            <person name="Ballesta J.P.G."/>
            <person name="Banrevi A."/>
            <person name="Bolle P.-A."/>
            <person name="Bolotin-Fukuhara M."/>
            <person name="Bossier P."/>
            <person name="Bou G."/>
            <person name="Boyer J."/>
            <person name="Buitrago M.J."/>
            <person name="Cheret G."/>
            <person name="Colleaux L."/>
            <person name="Daignan-Fornier B."/>
            <person name="del Rey F."/>
            <person name="Dion C."/>
            <person name="Domdey H."/>
            <person name="Duesterhoeft A."/>
            <person name="Duesterhus S."/>
            <person name="Entian K.-D."/>
            <person name="Erfle H."/>
            <person name="Esteban P.F."/>
            <person name="Feldmann H."/>
            <person name="Fernandes L."/>
            <person name="Fobo G.M."/>
            <person name="Fritz C."/>
            <person name="Fukuhara H."/>
            <person name="Gabel C."/>
            <person name="Gaillon L."/>
            <person name="Garcia-Cantalejo J.M."/>
            <person name="Garcia-Ramirez J.J."/>
            <person name="Gent M.E."/>
            <person name="Ghazvini M."/>
            <person name="Goffeau A."/>
            <person name="Gonzalez A."/>
            <person name="Grothues D."/>
            <person name="Guerreiro P."/>
            <person name="Hegemann J.H."/>
            <person name="Hewitt N."/>
            <person name="Hilger F."/>
            <person name="Hollenberg C.P."/>
            <person name="Horaitis O."/>
            <person name="Indge K.J."/>
            <person name="Jacquier A."/>
            <person name="James C.M."/>
            <person name="Jauniaux J.-C."/>
            <person name="Jimenez A."/>
            <person name="Keuchel H."/>
            <person name="Kirchrath L."/>
            <person name="Kleine K."/>
            <person name="Koetter P."/>
            <person name="Legrain P."/>
            <person name="Liebl S."/>
            <person name="Louis E.J."/>
            <person name="Maia e Silva A."/>
            <person name="Marck C."/>
            <person name="Monnier A.-L."/>
            <person name="Moestl D."/>
            <person name="Mueller S."/>
            <person name="Obermaier B."/>
            <person name="Oliver S.G."/>
            <person name="Pallier C."/>
            <person name="Pascolo S."/>
            <person name="Pfeiffer F."/>
            <person name="Philippsen P."/>
            <person name="Planta R.J."/>
            <person name="Pohl F.M."/>
            <person name="Pohl T.M."/>
            <person name="Poehlmann R."/>
            <person name="Portetelle D."/>
            <person name="Purnelle B."/>
            <person name="Puzos V."/>
            <person name="Ramezani Rad M."/>
            <person name="Rasmussen S.W."/>
            <person name="Remacha M.A."/>
            <person name="Revuelta J.L."/>
            <person name="Richard G.-F."/>
            <person name="Rieger M."/>
            <person name="Rodrigues-Pousada C."/>
            <person name="Rose M."/>
            <person name="Rupp T."/>
            <person name="Santos M.A."/>
            <person name="Schwager C."/>
            <person name="Sensen C."/>
            <person name="Skala J."/>
            <person name="Soares H."/>
            <person name="Sor F."/>
            <person name="Stegemann J."/>
            <person name="Tettelin H."/>
            <person name="Thierry A."/>
            <person name="Tzermia M."/>
            <person name="Urrestarazu L.A."/>
            <person name="van Dyck L."/>
            <person name="van Vliet-Reedijk J.C."/>
            <person name="Valens M."/>
            <person name="Vandenbol M."/>
            <person name="Vilela C."/>
            <person name="Vissers S."/>
            <person name="von Wettstein D."/>
            <person name="Voss H."/>
            <person name="Wiemann S."/>
            <person name="Xu G."/>
            <person name="Zimmermann J."/>
            <person name="Haasemann M."/>
            <person name="Becker I."/>
            <person name="Mewes H.-W."/>
        </authorList>
    </citation>
    <scope>NUCLEOTIDE SEQUENCE [LARGE SCALE GENOMIC DNA]</scope>
    <source>
        <strain>ATCC 204508 / S288c</strain>
    </source>
</reference>
<reference key="4">
    <citation type="journal article" date="2014" name="G3 (Bethesda)">
        <title>The reference genome sequence of Saccharomyces cerevisiae: Then and now.</title>
        <authorList>
            <person name="Engel S.R."/>
            <person name="Dietrich F.S."/>
            <person name="Fisk D.G."/>
            <person name="Binkley G."/>
            <person name="Balakrishnan R."/>
            <person name="Costanzo M.C."/>
            <person name="Dwight S.S."/>
            <person name="Hitz B.C."/>
            <person name="Karra K."/>
            <person name="Nash R.S."/>
            <person name="Weng S."/>
            <person name="Wong E.D."/>
            <person name="Lloyd P."/>
            <person name="Skrzypek M.S."/>
            <person name="Miyasato S.R."/>
            <person name="Simison M."/>
            <person name="Cherry J.M."/>
        </authorList>
    </citation>
    <scope>GENOME REANNOTATION</scope>
    <source>
        <strain>ATCC 204508 / S288c</strain>
    </source>
</reference>
<reference key="5">
    <citation type="journal article" date="1994" name="Yeast">
        <title>Sequence analysis of a 3.5 Kb EcoRI fragment from the left arm of Saccharomyces cerevisiae chromosome XI reveals the location of the MBR1 gene and a sequence related to a GTPase-activating protein.</title>
        <authorList>
            <person name="James C.M."/>
            <person name="Gent M.E."/>
            <person name="Oliver S.G."/>
        </authorList>
    </citation>
    <scope>NUCLEOTIDE SEQUENCE [GENOMIC DNA] OF 237-1104</scope>
</reference>
<reference key="6">
    <citation type="journal article" date="2003" name="Nature">
        <title>Global analysis of protein expression in yeast.</title>
        <authorList>
            <person name="Ghaemmaghami S."/>
            <person name="Huh W.-K."/>
            <person name="Bower K."/>
            <person name="Howson R.W."/>
            <person name="Belle A."/>
            <person name="Dephoure N."/>
            <person name="O'Shea E.K."/>
            <person name="Weissman J.S."/>
        </authorList>
    </citation>
    <scope>LEVEL OF PROTEIN EXPRESSION [LARGE SCALE ANALYSIS]</scope>
</reference>
<reference key="7">
    <citation type="journal article" date="2007" name="J. Proteome Res.">
        <title>Large-scale phosphorylation analysis of alpha-factor-arrested Saccharomyces cerevisiae.</title>
        <authorList>
            <person name="Li X."/>
            <person name="Gerber S.A."/>
            <person name="Rudner A.D."/>
            <person name="Beausoleil S.A."/>
            <person name="Haas W."/>
            <person name="Villen J."/>
            <person name="Elias J.E."/>
            <person name="Gygi S.P."/>
        </authorList>
    </citation>
    <scope>PHOSPHORYLATION [LARGE SCALE ANALYSIS] AT SER-854</scope>
    <scope>IDENTIFICATION BY MASS SPECTROMETRY [LARGE SCALE ANALYSIS]</scope>
    <source>
        <strain>ADR376</strain>
    </source>
</reference>
<reference key="8">
    <citation type="journal article" date="2008" name="Mol. Cell. Proteomics">
        <title>A multidimensional chromatography technology for in-depth phosphoproteome analysis.</title>
        <authorList>
            <person name="Albuquerque C.P."/>
            <person name="Smolka M.B."/>
            <person name="Payne S.H."/>
            <person name="Bafna V."/>
            <person name="Eng J."/>
            <person name="Zhou H."/>
        </authorList>
    </citation>
    <scope>PHOSPHORYLATION [LARGE SCALE ANALYSIS] AT SER-854</scope>
    <scope>IDENTIFICATION BY MASS SPECTROMETRY [LARGE SCALE ANALYSIS]</scope>
</reference>
<reference key="9">
    <citation type="journal article" date="2012" name="Proc. Natl. Acad. Sci. U.S.A.">
        <title>N-terminal acetylome analyses and functional insights of the N-terminal acetyltransferase NatB.</title>
        <authorList>
            <person name="Van Damme P."/>
            <person name="Lasa M."/>
            <person name="Polevoda B."/>
            <person name="Gazquez C."/>
            <person name="Elosegui-Artola A."/>
            <person name="Kim D.S."/>
            <person name="De Juan-Pardo E."/>
            <person name="Demeyer K."/>
            <person name="Hole K."/>
            <person name="Larrea E."/>
            <person name="Timmerman E."/>
            <person name="Prieto J."/>
            <person name="Arnesen T."/>
            <person name="Sherman F."/>
            <person name="Gevaert K."/>
            <person name="Aldabe R."/>
        </authorList>
    </citation>
    <scope>ACETYLATION [LARGE SCALE ANALYSIS] AT SER-2</scope>
    <scope>CLEAVAGE OF INITIATOR METHIONINE [LARGE SCALE ANALYSIS]</scope>
    <scope>IDENTIFICATION BY MASS SPECTROMETRY [LARGE SCALE ANALYSIS]</scope>
</reference>
<keyword id="KW-0007">Acetylation</keyword>
<keyword id="KW-0343">GTPase activation</keyword>
<keyword id="KW-0597">Phosphoprotein</keyword>
<keyword id="KW-1185">Reference proteome</keyword>
<feature type="initiator methionine" description="Removed" evidence="8">
    <location>
        <position position="1"/>
    </location>
</feature>
<feature type="chain" id="PRO_0000056656" description="Inhibitory regulator protein BUD2/CLA2">
    <location>
        <begin position="2"/>
        <end position="1104"/>
    </location>
</feature>
<feature type="domain" description="C2" evidence="1">
    <location>
        <begin position="316"/>
        <end position="444"/>
    </location>
</feature>
<feature type="domain" description="Ras-GAP" evidence="2">
    <location>
        <begin position="536"/>
        <end position="753"/>
    </location>
</feature>
<feature type="region of interest" description="Disordered" evidence="3">
    <location>
        <begin position="1027"/>
        <end position="1104"/>
    </location>
</feature>
<feature type="compositionally biased region" description="Polar residues" evidence="3">
    <location>
        <begin position="1029"/>
        <end position="1043"/>
    </location>
</feature>
<feature type="compositionally biased region" description="Polar residues" evidence="3">
    <location>
        <begin position="1052"/>
        <end position="1069"/>
    </location>
</feature>
<feature type="compositionally biased region" description="Basic residues" evidence="3">
    <location>
        <begin position="1090"/>
        <end position="1104"/>
    </location>
</feature>
<feature type="site" description="Arginine finger; crucial for GTP hydrolysis by stabilizing the transition state" evidence="2">
    <location>
        <position position="561"/>
    </location>
</feature>
<feature type="modified residue" description="N-acetylserine" evidence="8">
    <location>
        <position position="2"/>
    </location>
</feature>
<feature type="modified residue" description="Phosphoserine" evidence="6 7">
    <location>
        <position position="854"/>
    </location>
</feature>
<feature type="sequence conflict" description="In Ref. 1; CAA52228." evidence="5" ref="1">
    <original>N</original>
    <variation>Y</variation>
    <location>
        <position position="437"/>
    </location>
</feature>